<sequence length="176" mass="19251">MAWMLLLILIMVYPGSCALWVSQPPEIRTLEGSSAFLPCSFNASQGRLAIGSVTWFRDEVAPGKEVRNGTPEFRGRLAPLSSSRFLRDHQAELHIWDVRGHDAGIYVCRVEVLGLGVGTGNGTRLVVEKEYPQLGAGTVLLLRAGFYAVSFLSVAVGSTLYYQGKCHCHMGTHCHS</sequence>
<keyword id="KW-1003">Cell membrane</keyword>
<keyword id="KW-1015">Disulfide bond</keyword>
<keyword id="KW-0325">Glycoprotein</keyword>
<keyword id="KW-0391">Immunity</keyword>
<keyword id="KW-0393">Immunoglobulin domain</keyword>
<keyword id="KW-0472">Membrane</keyword>
<keyword id="KW-0675">Receptor</keyword>
<keyword id="KW-1185">Reference proteome</keyword>
<keyword id="KW-0732">Signal</keyword>
<keyword id="KW-0812">Transmembrane</keyword>
<keyword id="KW-1133">Transmembrane helix</keyword>
<accession>P61483</accession>
<accession>Q95JB8</accession>
<reference key="1">
    <citation type="journal article" date="2001" name="Eur. J. Immunol.">
        <title>Identification, molecular cloning and functional characterization of NKp46 and NKp30 natural cytotoxicity receptors in Macaca fascicularis NK cells.</title>
        <authorList>
            <person name="De Maria A."/>
            <person name="Biassoni R."/>
            <person name="Fogli M."/>
            <person name="Rizzi M."/>
            <person name="Cantoni C."/>
            <person name="Costa P."/>
            <person name="Conte R."/>
            <person name="Mavilio D."/>
            <person name="Ensoli B."/>
            <person name="Cafaro A."/>
            <person name="Moretta A."/>
            <person name="Moretta L."/>
        </authorList>
    </citation>
    <scope>NUCLEOTIDE SEQUENCE [MRNA]</scope>
    <source>
        <tissue>Lymphoid tissue</tissue>
    </source>
</reference>
<gene>
    <name type="primary">NCR3</name>
</gene>
<name>NCTR3_MACFA</name>
<evidence type="ECO:0000250" key="1">
    <source>
        <dbReference type="UniProtKB" id="O14931"/>
    </source>
</evidence>
<evidence type="ECO:0000255" key="2"/>
<evidence type="ECO:0000255" key="3">
    <source>
        <dbReference type="PROSITE-ProRule" id="PRU00114"/>
    </source>
</evidence>
<evidence type="ECO:0000305" key="4"/>
<dbReference type="EMBL" id="AJ278389">
    <property type="protein sequence ID" value="CAC41081.1"/>
    <property type="molecule type" value="mRNA"/>
</dbReference>
<dbReference type="RefSeq" id="XP_015305113.3">
    <property type="nucleotide sequence ID" value="XM_015449627.3"/>
</dbReference>
<dbReference type="SMR" id="P61483"/>
<dbReference type="STRING" id="9541.ENSMFAP00000001146"/>
<dbReference type="GlyCosmos" id="P61483">
    <property type="glycosylation" value="2 sites, No reported glycans"/>
</dbReference>
<dbReference type="GeneID" id="102133932"/>
<dbReference type="KEGG" id="mcf:102133932"/>
<dbReference type="CTD" id="259197"/>
<dbReference type="VEuPathDB" id="HostDB:ENSMFAG00000040516"/>
<dbReference type="eggNOG" id="ENOG502SGFD">
    <property type="taxonomic scope" value="Eukaryota"/>
</dbReference>
<dbReference type="OMA" id="WDIRGRD"/>
<dbReference type="Proteomes" id="UP000233100">
    <property type="component" value="Chromosome 4"/>
</dbReference>
<dbReference type="GO" id="GO:0005886">
    <property type="term" value="C:plasma membrane"/>
    <property type="evidence" value="ECO:0007669"/>
    <property type="project" value="UniProtKB-SubCell"/>
</dbReference>
<dbReference type="GO" id="GO:0002429">
    <property type="term" value="P:immune response-activating cell surface receptor signaling pathway"/>
    <property type="evidence" value="ECO:0000250"/>
    <property type="project" value="UniProtKB"/>
</dbReference>
<dbReference type="GO" id="GO:0030101">
    <property type="term" value="P:natural killer cell activation"/>
    <property type="evidence" value="ECO:0000250"/>
    <property type="project" value="UniProtKB"/>
</dbReference>
<dbReference type="GO" id="GO:0045954">
    <property type="term" value="P:positive regulation of natural killer cell mediated cytotoxicity"/>
    <property type="evidence" value="ECO:0007669"/>
    <property type="project" value="InterPro"/>
</dbReference>
<dbReference type="CDD" id="cd20926">
    <property type="entry name" value="IgV_NKp30"/>
    <property type="match status" value="1"/>
</dbReference>
<dbReference type="FunFam" id="2.60.40.10:FF:000860">
    <property type="entry name" value="natural cytotoxicity triggering receptor 3"/>
    <property type="match status" value="1"/>
</dbReference>
<dbReference type="Gene3D" id="2.60.40.10">
    <property type="entry name" value="Immunoglobulins"/>
    <property type="match status" value="1"/>
</dbReference>
<dbReference type="InterPro" id="IPR007110">
    <property type="entry name" value="Ig-like_dom"/>
</dbReference>
<dbReference type="InterPro" id="IPR036179">
    <property type="entry name" value="Ig-like_dom_sf"/>
</dbReference>
<dbReference type="InterPro" id="IPR013783">
    <property type="entry name" value="Ig-like_fold"/>
</dbReference>
<dbReference type="InterPro" id="IPR003599">
    <property type="entry name" value="Ig_sub"/>
</dbReference>
<dbReference type="InterPro" id="IPR013106">
    <property type="entry name" value="Ig_V-set"/>
</dbReference>
<dbReference type="InterPro" id="IPR043226">
    <property type="entry name" value="NCR3"/>
</dbReference>
<dbReference type="PANTHER" id="PTHR47904">
    <property type="entry name" value="NATURAL CYTOTOXICITY TRIGGERING RECEPTOR 3"/>
    <property type="match status" value="1"/>
</dbReference>
<dbReference type="PANTHER" id="PTHR47904:SF1">
    <property type="entry name" value="NATURAL CYTOTOXICITY TRIGGERING RECEPTOR 3"/>
    <property type="match status" value="1"/>
</dbReference>
<dbReference type="Pfam" id="PF07686">
    <property type="entry name" value="V-set"/>
    <property type="match status" value="1"/>
</dbReference>
<dbReference type="SMART" id="SM00409">
    <property type="entry name" value="IG"/>
    <property type="match status" value="1"/>
</dbReference>
<dbReference type="SUPFAM" id="SSF48726">
    <property type="entry name" value="Immunoglobulin"/>
    <property type="match status" value="1"/>
</dbReference>
<dbReference type="PROSITE" id="PS50835">
    <property type="entry name" value="IG_LIKE"/>
    <property type="match status" value="1"/>
</dbReference>
<feature type="signal peptide" evidence="2">
    <location>
        <begin position="1"/>
        <end position="18"/>
    </location>
</feature>
<feature type="chain" id="PRO_0000015033" description="Natural cytotoxicity triggering receptor 3">
    <location>
        <begin position="19"/>
        <end position="176"/>
    </location>
</feature>
<feature type="topological domain" description="Extracellular" evidence="2">
    <location>
        <begin position="19"/>
        <end position="135"/>
    </location>
</feature>
<feature type="transmembrane region" description="Helical" evidence="2">
    <location>
        <begin position="136"/>
        <end position="156"/>
    </location>
</feature>
<feature type="topological domain" description="Cytoplasmic" evidence="2">
    <location>
        <begin position="157"/>
        <end position="176"/>
    </location>
</feature>
<feature type="domain" description="Ig-like">
    <location>
        <begin position="19"/>
        <end position="126"/>
    </location>
</feature>
<feature type="glycosylation site" description="N-linked (GlcNAc...) asparagine" evidence="2">
    <location>
        <position position="42"/>
    </location>
</feature>
<feature type="glycosylation site" description="N-linked (GlcNAc...) asparagine" evidence="2">
    <location>
        <position position="121"/>
    </location>
</feature>
<feature type="disulfide bond" evidence="3">
    <location>
        <begin position="39"/>
        <end position="108"/>
    </location>
</feature>
<proteinExistence type="evidence at transcript level"/>
<protein>
    <recommendedName>
        <fullName>Natural cytotoxicity triggering receptor 3</fullName>
    </recommendedName>
    <alternativeName>
        <fullName>Natural killer cell p30-related protein</fullName>
        <shortName>NK-p30</shortName>
        <shortName>NKp30</shortName>
    </alternativeName>
    <cdAntigenName>CD337</cdAntigenName>
</protein>
<comment type="function">
    <text evidence="1">Cell membrane receptor of natural killer/NK cells that is activated by binding of extracellular ligands including BAG6 and NCR3LG1. Stimulates NK cells cytotoxicity toward neighboring cells producing these ligands. It controls, for instance, NK cells cytotoxicity against tumor cells. Engagement of NCR3 by BAG6 also promotes myeloid dendritic cells (DC) maturation, both through killing DCs that did not acquire a mature phenotype, and inducing the release by NK cells of TNFA and IFNG that promote DC maturation.</text>
</comment>
<comment type="subunit">
    <text evidence="1">Homodimer in the unliganted form. Interacts with CD3Z. Interacts with and is activated by binding to NCR3LG1. Interacts with and is activated by binding to BAG6. Interacts with and is inhibited by binding to LGALS3.</text>
</comment>
<comment type="subcellular location">
    <subcellularLocation>
        <location evidence="1">Cell membrane</location>
        <topology evidence="2">Single-pass type I membrane protein</topology>
    </subcellularLocation>
</comment>
<comment type="similarity">
    <text evidence="4">Belongs to the natural cytotoxicity receptor (NCR) family.</text>
</comment>
<organism>
    <name type="scientific">Macaca fascicularis</name>
    <name type="common">Crab-eating macaque</name>
    <name type="synonym">Cynomolgus monkey</name>
    <dbReference type="NCBI Taxonomy" id="9541"/>
    <lineage>
        <taxon>Eukaryota</taxon>
        <taxon>Metazoa</taxon>
        <taxon>Chordata</taxon>
        <taxon>Craniata</taxon>
        <taxon>Vertebrata</taxon>
        <taxon>Euteleostomi</taxon>
        <taxon>Mammalia</taxon>
        <taxon>Eutheria</taxon>
        <taxon>Euarchontoglires</taxon>
        <taxon>Primates</taxon>
        <taxon>Haplorrhini</taxon>
        <taxon>Catarrhini</taxon>
        <taxon>Cercopithecidae</taxon>
        <taxon>Cercopithecinae</taxon>
        <taxon>Macaca</taxon>
    </lineage>
</organism>